<comment type="catalytic activity">
    <reaction evidence="1">
        <text>N(2)-acetyl-L-ornithine + 2-oxoglutarate = N-acetyl-L-glutamate 5-semialdehyde + L-glutamate</text>
        <dbReference type="Rhea" id="RHEA:18049"/>
        <dbReference type="ChEBI" id="CHEBI:16810"/>
        <dbReference type="ChEBI" id="CHEBI:29123"/>
        <dbReference type="ChEBI" id="CHEBI:29985"/>
        <dbReference type="ChEBI" id="CHEBI:57805"/>
        <dbReference type="EC" id="2.6.1.11"/>
    </reaction>
</comment>
<comment type="cofactor">
    <cofactor evidence="1">
        <name>pyridoxal 5'-phosphate</name>
        <dbReference type="ChEBI" id="CHEBI:597326"/>
    </cofactor>
    <text evidence="1">Binds 1 pyridoxal phosphate per subunit.</text>
</comment>
<comment type="pathway">
    <text evidence="1">Amino-acid biosynthesis; L-arginine biosynthesis; N(2)-acetyl-L-ornithine from L-glutamate: step 4/4.</text>
</comment>
<comment type="subunit">
    <text evidence="1">Homodimer.</text>
</comment>
<comment type="subcellular location">
    <subcellularLocation>
        <location evidence="1">Cytoplasm</location>
    </subcellularLocation>
</comment>
<comment type="miscellaneous">
    <text evidence="1">May also have succinyldiaminopimelate aminotransferase activity, thus carrying out the corresponding step in lysine biosynthesis.</text>
</comment>
<comment type="similarity">
    <text evidence="1">Belongs to the class-III pyridoxal-phosphate-dependent aminotransferase family. ArgD subfamily.</text>
</comment>
<organism>
    <name type="scientific">Nitrosomonas europaea (strain ATCC 19718 / CIP 103999 / KCTC 2705 / NBRC 14298)</name>
    <dbReference type="NCBI Taxonomy" id="228410"/>
    <lineage>
        <taxon>Bacteria</taxon>
        <taxon>Pseudomonadati</taxon>
        <taxon>Pseudomonadota</taxon>
        <taxon>Betaproteobacteria</taxon>
        <taxon>Nitrosomonadales</taxon>
        <taxon>Nitrosomonadaceae</taxon>
        <taxon>Nitrosomonas</taxon>
    </lineage>
</organism>
<reference key="1">
    <citation type="journal article" date="2003" name="J. Bacteriol.">
        <title>Complete genome sequence of the ammonia-oxidizing bacterium and obligate chemolithoautotroph Nitrosomonas europaea.</title>
        <authorList>
            <person name="Chain P."/>
            <person name="Lamerdin J.E."/>
            <person name="Larimer F.W."/>
            <person name="Regala W."/>
            <person name="Lao V."/>
            <person name="Land M.L."/>
            <person name="Hauser L."/>
            <person name="Hooper A.B."/>
            <person name="Klotz M.G."/>
            <person name="Norton J."/>
            <person name="Sayavedra-Soto L.A."/>
            <person name="Arciero D.M."/>
            <person name="Hommes N.G."/>
            <person name="Whittaker M.M."/>
            <person name="Arp D.J."/>
        </authorList>
    </citation>
    <scope>NUCLEOTIDE SEQUENCE [LARGE SCALE GENOMIC DNA]</scope>
    <source>
        <strain>ATCC 19718 / CIP 103999 / KCTC 2705 / NBRC 14298</strain>
    </source>
</reference>
<proteinExistence type="inferred from homology"/>
<dbReference type="EC" id="2.6.1.11" evidence="1"/>
<dbReference type="EMBL" id="AL954747">
    <property type="protein sequence ID" value="CAD85350.1"/>
    <property type="molecule type" value="Genomic_DNA"/>
</dbReference>
<dbReference type="RefSeq" id="WP_011112007.1">
    <property type="nucleotide sequence ID" value="NC_004757.1"/>
</dbReference>
<dbReference type="SMR" id="Q82UP3"/>
<dbReference type="STRING" id="228410.NE1439"/>
<dbReference type="GeneID" id="87104613"/>
<dbReference type="KEGG" id="neu:NE1439"/>
<dbReference type="eggNOG" id="COG4992">
    <property type="taxonomic scope" value="Bacteria"/>
</dbReference>
<dbReference type="HOGENOM" id="CLU_016922_10_1_4"/>
<dbReference type="PhylomeDB" id="Q82UP3"/>
<dbReference type="UniPathway" id="UPA00068">
    <property type="reaction ID" value="UER00109"/>
</dbReference>
<dbReference type="Proteomes" id="UP000001416">
    <property type="component" value="Chromosome"/>
</dbReference>
<dbReference type="GO" id="GO:0005737">
    <property type="term" value="C:cytoplasm"/>
    <property type="evidence" value="ECO:0007669"/>
    <property type="project" value="UniProtKB-SubCell"/>
</dbReference>
<dbReference type="GO" id="GO:0042802">
    <property type="term" value="F:identical protein binding"/>
    <property type="evidence" value="ECO:0007669"/>
    <property type="project" value="TreeGrafter"/>
</dbReference>
<dbReference type="GO" id="GO:0003992">
    <property type="term" value="F:N2-acetyl-L-ornithine:2-oxoglutarate 5-aminotransferase activity"/>
    <property type="evidence" value="ECO:0007669"/>
    <property type="project" value="UniProtKB-UniRule"/>
</dbReference>
<dbReference type="GO" id="GO:0030170">
    <property type="term" value="F:pyridoxal phosphate binding"/>
    <property type="evidence" value="ECO:0007669"/>
    <property type="project" value="InterPro"/>
</dbReference>
<dbReference type="GO" id="GO:0006526">
    <property type="term" value="P:L-arginine biosynthetic process"/>
    <property type="evidence" value="ECO:0007669"/>
    <property type="project" value="UniProtKB-UniRule"/>
</dbReference>
<dbReference type="CDD" id="cd00610">
    <property type="entry name" value="OAT_like"/>
    <property type="match status" value="1"/>
</dbReference>
<dbReference type="FunFam" id="3.40.640.10:FF:000004">
    <property type="entry name" value="Acetylornithine aminotransferase"/>
    <property type="match status" value="1"/>
</dbReference>
<dbReference type="Gene3D" id="3.90.1150.10">
    <property type="entry name" value="Aspartate Aminotransferase, domain 1"/>
    <property type="match status" value="1"/>
</dbReference>
<dbReference type="Gene3D" id="3.40.640.10">
    <property type="entry name" value="Type I PLP-dependent aspartate aminotransferase-like (Major domain)"/>
    <property type="match status" value="1"/>
</dbReference>
<dbReference type="HAMAP" id="MF_01107">
    <property type="entry name" value="ArgD_aminotrans_3"/>
    <property type="match status" value="1"/>
</dbReference>
<dbReference type="InterPro" id="IPR004636">
    <property type="entry name" value="AcOrn/SuccOrn_fam"/>
</dbReference>
<dbReference type="InterPro" id="IPR005814">
    <property type="entry name" value="Aminotrans_3"/>
</dbReference>
<dbReference type="InterPro" id="IPR049704">
    <property type="entry name" value="Aminotrans_3_PPA_site"/>
</dbReference>
<dbReference type="InterPro" id="IPR050103">
    <property type="entry name" value="Class-III_PLP-dep_AT"/>
</dbReference>
<dbReference type="InterPro" id="IPR015424">
    <property type="entry name" value="PyrdxlP-dep_Trfase"/>
</dbReference>
<dbReference type="InterPro" id="IPR015421">
    <property type="entry name" value="PyrdxlP-dep_Trfase_major"/>
</dbReference>
<dbReference type="InterPro" id="IPR015422">
    <property type="entry name" value="PyrdxlP-dep_Trfase_small"/>
</dbReference>
<dbReference type="NCBIfam" id="TIGR00707">
    <property type="entry name" value="argD"/>
    <property type="match status" value="1"/>
</dbReference>
<dbReference type="NCBIfam" id="NF002325">
    <property type="entry name" value="PRK01278.1"/>
    <property type="match status" value="1"/>
</dbReference>
<dbReference type="PANTHER" id="PTHR11986:SF79">
    <property type="entry name" value="ACETYLORNITHINE AMINOTRANSFERASE, MITOCHONDRIAL"/>
    <property type="match status" value="1"/>
</dbReference>
<dbReference type="PANTHER" id="PTHR11986">
    <property type="entry name" value="AMINOTRANSFERASE CLASS III"/>
    <property type="match status" value="1"/>
</dbReference>
<dbReference type="Pfam" id="PF00202">
    <property type="entry name" value="Aminotran_3"/>
    <property type="match status" value="1"/>
</dbReference>
<dbReference type="PIRSF" id="PIRSF000521">
    <property type="entry name" value="Transaminase_4ab_Lys_Orn"/>
    <property type="match status" value="1"/>
</dbReference>
<dbReference type="SUPFAM" id="SSF53383">
    <property type="entry name" value="PLP-dependent transferases"/>
    <property type="match status" value="1"/>
</dbReference>
<dbReference type="PROSITE" id="PS00600">
    <property type="entry name" value="AA_TRANSFER_CLASS_3"/>
    <property type="match status" value="1"/>
</dbReference>
<evidence type="ECO:0000255" key="1">
    <source>
        <dbReference type="HAMAP-Rule" id="MF_01107"/>
    </source>
</evidence>
<protein>
    <recommendedName>
        <fullName evidence="1">Acetylornithine aminotransferase</fullName>
        <shortName evidence="1">ACOAT</shortName>
        <ecNumber evidence="1">2.6.1.11</ecNumber>
    </recommendedName>
</protein>
<accession>Q82UP3</accession>
<keyword id="KW-0028">Amino-acid biosynthesis</keyword>
<keyword id="KW-0032">Aminotransferase</keyword>
<keyword id="KW-0055">Arginine biosynthesis</keyword>
<keyword id="KW-0963">Cytoplasm</keyword>
<keyword id="KW-0663">Pyridoxal phosphate</keyword>
<keyword id="KW-1185">Reference proteome</keyword>
<keyword id="KW-0808">Transferase</keyword>
<feature type="chain" id="PRO_0000112761" description="Acetylornithine aminotransferase">
    <location>
        <begin position="1"/>
        <end position="393"/>
    </location>
</feature>
<feature type="binding site" evidence="1">
    <location>
        <begin position="95"/>
        <end position="96"/>
    </location>
    <ligand>
        <name>pyridoxal 5'-phosphate</name>
        <dbReference type="ChEBI" id="CHEBI:597326"/>
    </ligand>
</feature>
<feature type="binding site" evidence="1">
    <location>
        <position position="127"/>
    </location>
    <ligand>
        <name>pyridoxal 5'-phosphate</name>
        <dbReference type="ChEBI" id="CHEBI:597326"/>
    </ligand>
</feature>
<feature type="binding site" evidence="1">
    <location>
        <position position="130"/>
    </location>
    <ligand>
        <name>N(2)-acetyl-L-ornithine</name>
        <dbReference type="ChEBI" id="CHEBI:57805"/>
    </ligand>
</feature>
<feature type="binding site" evidence="1">
    <location>
        <begin position="214"/>
        <end position="217"/>
    </location>
    <ligand>
        <name>pyridoxal 5'-phosphate</name>
        <dbReference type="ChEBI" id="CHEBI:597326"/>
    </ligand>
</feature>
<feature type="binding site" evidence="1">
    <location>
        <position position="271"/>
    </location>
    <ligand>
        <name>N(2)-acetyl-L-ornithine</name>
        <dbReference type="ChEBI" id="CHEBI:57805"/>
    </ligand>
</feature>
<feature type="binding site" evidence="1">
    <location>
        <position position="272"/>
    </location>
    <ligand>
        <name>pyridoxal 5'-phosphate</name>
        <dbReference type="ChEBI" id="CHEBI:597326"/>
    </ligand>
</feature>
<feature type="modified residue" description="N6-(pyridoxal phosphate)lysine" evidence="1">
    <location>
        <position position="243"/>
    </location>
</feature>
<gene>
    <name evidence="1" type="primary">argD</name>
    <name type="ordered locus">NE1439</name>
</gene>
<name>ARGD_NITEU</name>
<sequence>MSHVMNTYARLPVTFVKGEGVWLWDDQGNRYLDALSGIAVCGVGHCHPVLVKALCEQVSTLIHTSNVYHIQHQERLADRLTSLSGLEKAFFCNSGAEANEAAIKLARLYGHNQGINLPTIIVMERSFHGRTMATLTATGNRKTQAGFEPLLTGFVRVPYDDLEAVNKVAANNREIVAILLETYQGEGGVNFPQANYLQGLRRICDQNGWLLMLDEVQCGLGRTGKWFAFQHSEVMPDAMTLAKGLGSGVPIGACLAGGKAAEVFKPGNHASTFGGNPLACRAALTTLDIIEQEGLMDNAVTIGNFMWEEFGRRLQAWQDVLKIRGQGMMIGIELPVPCSELVPEALKRRVLVNVTSEKVVRLLPALNMQKAEAEQVVTEVSALITWFLESRVK</sequence>